<organism>
    <name type="scientific">Lacticaseibacillus casei (strain BL23)</name>
    <name type="common">Lactobacillus casei</name>
    <dbReference type="NCBI Taxonomy" id="543734"/>
    <lineage>
        <taxon>Bacteria</taxon>
        <taxon>Bacillati</taxon>
        <taxon>Bacillota</taxon>
        <taxon>Bacilli</taxon>
        <taxon>Lactobacillales</taxon>
        <taxon>Lactobacillaceae</taxon>
        <taxon>Lacticaseibacillus</taxon>
    </lineage>
</organism>
<reference key="1">
    <citation type="submission" date="2008-06" db="EMBL/GenBank/DDBJ databases">
        <title>Lactobacillus casei BL23 complete genome sequence.</title>
        <authorList>
            <person name="Maze A."/>
            <person name="Boel G."/>
            <person name="Bourand A."/>
            <person name="Loux V."/>
            <person name="Gibrat J.F."/>
            <person name="Zuniga M."/>
            <person name="Hartke A."/>
            <person name="Deutscher J."/>
        </authorList>
    </citation>
    <scope>NUCLEOTIDE SEQUENCE [LARGE SCALE GENOMIC DNA]</scope>
    <source>
        <strain>BL23</strain>
    </source>
</reference>
<comment type="similarity">
    <text evidence="1">Belongs to the bacterial ribosomal protein bL32 family.</text>
</comment>
<feature type="chain" id="PRO_1000120135" description="Large ribosomal subunit protein bL32">
    <location>
        <begin position="1"/>
        <end position="63"/>
    </location>
</feature>
<keyword id="KW-0687">Ribonucleoprotein</keyword>
<keyword id="KW-0689">Ribosomal protein</keyword>
<protein>
    <recommendedName>
        <fullName evidence="1">Large ribosomal subunit protein bL32</fullName>
    </recommendedName>
    <alternativeName>
        <fullName evidence="2">50S ribosomal protein L32</fullName>
    </alternativeName>
</protein>
<proteinExistence type="inferred from homology"/>
<name>RL32_LACCB</name>
<evidence type="ECO:0000255" key="1">
    <source>
        <dbReference type="HAMAP-Rule" id="MF_00340"/>
    </source>
</evidence>
<evidence type="ECO:0000305" key="2"/>
<gene>
    <name evidence="1" type="primary">rpmF</name>
    <name type="ordered locus">LCABL_15780</name>
</gene>
<dbReference type="EMBL" id="FM177140">
    <property type="protein sequence ID" value="CAQ66659.1"/>
    <property type="molecule type" value="Genomic_DNA"/>
</dbReference>
<dbReference type="SMR" id="B3WE58"/>
<dbReference type="KEGG" id="lcb:LCABL_15780"/>
<dbReference type="HOGENOM" id="CLU_129084_2_0_9"/>
<dbReference type="GO" id="GO:0015934">
    <property type="term" value="C:large ribosomal subunit"/>
    <property type="evidence" value="ECO:0007669"/>
    <property type="project" value="InterPro"/>
</dbReference>
<dbReference type="GO" id="GO:0003735">
    <property type="term" value="F:structural constituent of ribosome"/>
    <property type="evidence" value="ECO:0007669"/>
    <property type="project" value="InterPro"/>
</dbReference>
<dbReference type="GO" id="GO:0006412">
    <property type="term" value="P:translation"/>
    <property type="evidence" value="ECO:0007669"/>
    <property type="project" value="UniProtKB-UniRule"/>
</dbReference>
<dbReference type="HAMAP" id="MF_00340">
    <property type="entry name" value="Ribosomal_bL32"/>
    <property type="match status" value="1"/>
</dbReference>
<dbReference type="InterPro" id="IPR002677">
    <property type="entry name" value="Ribosomal_bL32"/>
</dbReference>
<dbReference type="InterPro" id="IPR044957">
    <property type="entry name" value="Ribosomal_bL32_bact"/>
</dbReference>
<dbReference type="InterPro" id="IPR011332">
    <property type="entry name" value="Ribosomal_zn-bd"/>
</dbReference>
<dbReference type="NCBIfam" id="TIGR01031">
    <property type="entry name" value="rpmF_bact"/>
    <property type="match status" value="1"/>
</dbReference>
<dbReference type="PANTHER" id="PTHR35534">
    <property type="entry name" value="50S RIBOSOMAL PROTEIN L32"/>
    <property type="match status" value="1"/>
</dbReference>
<dbReference type="PANTHER" id="PTHR35534:SF1">
    <property type="entry name" value="LARGE RIBOSOMAL SUBUNIT PROTEIN BL32"/>
    <property type="match status" value="1"/>
</dbReference>
<dbReference type="Pfam" id="PF01783">
    <property type="entry name" value="Ribosomal_L32p"/>
    <property type="match status" value="1"/>
</dbReference>
<dbReference type="SUPFAM" id="SSF57829">
    <property type="entry name" value="Zn-binding ribosomal proteins"/>
    <property type="match status" value="1"/>
</dbReference>
<accession>B3WE58</accession>
<sequence length="63" mass="7095">MAVPARRTSKTKKRMRRGHIKLNVPNLQFDAATGEYRISHHVSPKGYYKGAQVVKKSDDNANA</sequence>